<reference key="1">
    <citation type="journal article" date="2011" name="PLoS Genet.">
        <title>Genomic analysis of the necrotrophic fungal pathogens Sclerotinia sclerotiorum and Botrytis cinerea.</title>
        <authorList>
            <person name="Amselem J."/>
            <person name="Cuomo C.A."/>
            <person name="van Kan J.A.L."/>
            <person name="Viaud M."/>
            <person name="Benito E.P."/>
            <person name="Couloux A."/>
            <person name="Coutinho P.M."/>
            <person name="de Vries R.P."/>
            <person name="Dyer P.S."/>
            <person name="Fillinger S."/>
            <person name="Fournier E."/>
            <person name="Gout L."/>
            <person name="Hahn M."/>
            <person name="Kohn L."/>
            <person name="Lapalu N."/>
            <person name="Plummer K.M."/>
            <person name="Pradier J.-M."/>
            <person name="Quevillon E."/>
            <person name="Sharon A."/>
            <person name="Simon A."/>
            <person name="ten Have A."/>
            <person name="Tudzynski B."/>
            <person name="Tudzynski P."/>
            <person name="Wincker P."/>
            <person name="Andrew M."/>
            <person name="Anthouard V."/>
            <person name="Beever R.E."/>
            <person name="Beffa R."/>
            <person name="Benoit I."/>
            <person name="Bouzid O."/>
            <person name="Brault B."/>
            <person name="Chen Z."/>
            <person name="Choquer M."/>
            <person name="Collemare J."/>
            <person name="Cotton P."/>
            <person name="Danchin E.G."/>
            <person name="Da Silva C."/>
            <person name="Gautier A."/>
            <person name="Giraud C."/>
            <person name="Giraud T."/>
            <person name="Gonzalez C."/>
            <person name="Grossetete S."/>
            <person name="Gueldener U."/>
            <person name="Henrissat B."/>
            <person name="Howlett B.J."/>
            <person name="Kodira C."/>
            <person name="Kretschmer M."/>
            <person name="Lappartient A."/>
            <person name="Leroch M."/>
            <person name="Levis C."/>
            <person name="Mauceli E."/>
            <person name="Neuveglise C."/>
            <person name="Oeser B."/>
            <person name="Pearson M."/>
            <person name="Poulain J."/>
            <person name="Poussereau N."/>
            <person name="Quesneville H."/>
            <person name="Rascle C."/>
            <person name="Schumacher J."/>
            <person name="Segurens B."/>
            <person name="Sexton A."/>
            <person name="Silva E."/>
            <person name="Sirven C."/>
            <person name="Soanes D.M."/>
            <person name="Talbot N.J."/>
            <person name="Templeton M."/>
            <person name="Yandava C."/>
            <person name="Yarden O."/>
            <person name="Zeng Q."/>
            <person name="Rollins J.A."/>
            <person name="Lebrun M.-H."/>
            <person name="Dickman M."/>
        </authorList>
    </citation>
    <scope>NUCLEOTIDE SEQUENCE [LARGE SCALE GENOMIC DNA]</scope>
    <source>
        <strain>B05.10</strain>
    </source>
</reference>
<reference key="2">
    <citation type="journal article" date="2012" name="Eukaryot. Cell">
        <title>Genome update of Botrytis cinerea strains B05.10 and T4.</title>
        <authorList>
            <person name="Staats M."/>
            <person name="van Kan J.A.L."/>
        </authorList>
    </citation>
    <scope>NUCLEOTIDE SEQUENCE [LARGE SCALE GENOMIC DNA]</scope>
    <scope>GENOME REANNOTATION</scope>
    <source>
        <strain>B05.10</strain>
    </source>
</reference>
<reference key="3">
    <citation type="journal article" date="2017" name="Mol. Plant Pathol.">
        <title>A gapless genome sequence of the fungus Botrytis cinerea.</title>
        <authorList>
            <person name="van Kan J.A.L."/>
            <person name="Stassen J.H.M."/>
            <person name="Mosbach A."/>
            <person name="van der Lee T.A.J."/>
            <person name="Faino L."/>
            <person name="Farmer A.D."/>
            <person name="Papasotiriou D.G."/>
            <person name="Zhou S."/>
            <person name="Seidl M.F."/>
            <person name="Cottam E."/>
            <person name="Edel D."/>
            <person name="Hahn M."/>
            <person name="Schwartz D.C."/>
            <person name="Dietrich R.A."/>
            <person name="Widdison S."/>
            <person name="Scalliet G."/>
        </authorList>
    </citation>
    <scope>NUCLEOTIDE SEQUENCE [LARGE SCALE GENOMIC DNA]</scope>
    <scope>GENOME REANNOTATION</scope>
    <source>
        <strain>B05.10</strain>
    </source>
</reference>
<feature type="chain" id="PRO_0000411868" description="Probable Xaa-Pro aminopeptidase pepP">
    <location>
        <begin position="1"/>
        <end position="458"/>
    </location>
</feature>
<feature type="binding site" evidence="1">
    <location>
        <position position="254"/>
    </location>
    <ligand>
        <name>Mn(2+)</name>
        <dbReference type="ChEBI" id="CHEBI:29035"/>
        <label>2</label>
    </ligand>
</feature>
<feature type="binding site" evidence="1">
    <location>
        <position position="265"/>
    </location>
    <ligand>
        <name>Mn(2+)</name>
        <dbReference type="ChEBI" id="CHEBI:29035"/>
        <label>1</label>
    </ligand>
</feature>
<feature type="binding site" evidence="1">
    <location>
        <position position="265"/>
    </location>
    <ligand>
        <name>Mn(2+)</name>
        <dbReference type="ChEBI" id="CHEBI:29035"/>
        <label>2</label>
    </ligand>
</feature>
<feature type="binding site" evidence="1">
    <location>
        <position position="388"/>
    </location>
    <ligand>
        <name>Mn(2+)</name>
        <dbReference type="ChEBI" id="CHEBI:29035"/>
        <label>1</label>
    </ligand>
</feature>
<feature type="binding site" evidence="1">
    <location>
        <position position="428"/>
    </location>
    <ligand>
        <name>Mn(2+)</name>
        <dbReference type="ChEBI" id="CHEBI:29035"/>
        <label>1</label>
    </ligand>
</feature>
<feature type="binding site" evidence="1">
    <location>
        <position position="428"/>
    </location>
    <ligand>
        <name>Mn(2+)</name>
        <dbReference type="ChEBI" id="CHEBI:29035"/>
        <label>2</label>
    </ligand>
</feature>
<evidence type="ECO:0000250" key="1"/>
<evidence type="ECO:0000305" key="2"/>
<gene>
    <name type="primary">pepP</name>
    <name type="ORF">BC1G_10932</name>
    <name type="ORF">BCIN_16g03530</name>
</gene>
<keyword id="KW-0031">Aminopeptidase</keyword>
<keyword id="KW-0378">Hydrolase</keyword>
<keyword id="KW-0464">Manganese</keyword>
<keyword id="KW-0479">Metal-binding</keyword>
<keyword id="KW-0482">Metalloprotease</keyword>
<keyword id="KW-0645">Protease</keyword>
<keyword id="KW-1185">Reference proteome</keyword>
<organism>
    <name type="scientific">Botryotinia fuckeliana (strain B05.10)</name>
    <name type="common">Noble rot fungus</name>
    <name type="synonym">Botrytis cinerea</name>
    <dbReference type="NCBI Taxonomy" id="332648"/>
    <lineage>
        <taxon>Eukaryota</taxon>
        <taxon>Fungi</taxon>
        <taxon>Dikarya</taxon>
        <taxon>Ascomycota</taxon>
        <taxon>Pezizomycotina</taxon>
        <taxon>Leotiomycetes</taxon>
        <taxon>Helotiales</taxon>
        <taxon>Sclerotiniaceae</taxon>
        <taxon>Botrytis</taxon>
    </lineage>
</organism>
<accession>A6SDE9</accession>
<accession>A0A384K734</accession>
<sequence length="458" mass="51624">MASSTDTILKGKYPAKEHVRKVVEYIKSKEPEAEGVLYLEAQKTIMIEDNDEAAPFRQRRFFYYLTGCDLPDAYFTYDIATDKSTLFIPPIDPESVIWTGLPLSPKEALALYDVDEVLTTDTINAQLALPNQTKVWAIAPQISTHITFLEFPQKDFTLLKEAIEEARVRKSEYEVALMRKANEISKVGHTAVLKAVKHAKNERELEALFIKESIANGAREQAYHSIVASGTAAATLHYMKNSEELDGKLNLLLDAGGEYKCYASDITRTFPINGRFTPESRSIYDIVLSMQSQCISMLKAGVSWDEVHLLAHKVAIEGLLSLGILKGDKEEILKARTSVAFFPHGLGHYLGMDTHDTGGHPNYEDKDRLFRYLRVRGNLPEGSVVTVEPGIYFCRFIIEPYLKDPAHAQYINSDILEKYWEVGGVRIEDNVLITKDGYDNLTTVVKDVEEMEKIINES</sequence>
<dbReference type="EC" id="3.4.11.9"/>
<dbReference type="EMBL" id="CP009820">
    <property type="protein sequence ID" value="ATZ58628.1"/>
    <property type="status" value="ALT_INIT"/>
    <property type="molecule type" value="Genomic_DNA"/>
</dbReference>
<dbReference type="RefSeq" id="XP_001550759.1">
    <property type="nucleotide sequence ID" value="XM_001550709.1"/>
</dbReference>
<dbReference type="SMR" id="A6SDE9"/>
<dbReference type="EnsemblFungi" id="Bcin16g03530.1">
    <property type="protein sequence ID" value="Bcin16p03530.1"/>
    <property type="gene ID" value="Bcin16g03530"/>
</dbReference>
<dbReference type="GeneID" id="5431260"/>
<dbReference type="KEGG" id="bfu:BCIN_16g03530"/>
<dbReference type="VEuPathDB" id="FungiDB:Bcin16g03530"/>
<dbReference type="OMA" id="DAHALFF"/>
<dbReference type="OrthoDB" id="10261878at2759"/>
<dbReference type="Proteomes" id="UP000001798">
    <property type="component" value="Chromosome bcin16"/>
</dbReference>
<dbReference type="GO" id="GO:0030145">
    <property type="term" value="F:manganese ion binding"/>
    <property type="evidence" value="ECO:0007669"/>
    <property type="project" value="InterPro"/>
</dbReference>
<dbReference type="GO" id="GO:0070006">
    <property type="term" value="F:metalloaminopeptidase activity"/>
    <property type="evidence" value="ECO:0007669"/>
    <property type="project" value="InterPro"/>
</dbReference>
<dbReference type="GO" id="GO:0006508">
    <property type="term" value="P:proteolysis"/>
    <property type="evidence" value="ECO:0007669"/>
    <property type="project" value="UniProtKB-KW"/>
</dbReference>
<dbReference type="CDD" id="cd01087">
    <property type="entry name" value="Prolidase"/>
    <property type="match status" value="1"/>
</dbReference>
<dbReference type="FunFam" id="3.90.230.10:FF:000002">
    <property type="entry name" value="Xaa-Pro aminopeptidase 3"/>
    <property type="match status" value="1"/>
</dbReference>
<dbReference type="Gene3D" id="3.90.230.10">
    <property type="entry name" value="Creatinase/methionine aminopeptidase superfamily"/>
    <property type="match status" value="1"/>
</dbReference>
<dbReference type="Gene3D" id="3.40.350.10">
    <property type="entry name" value="Creatinase/prolidase N-terminal domain"/>
    <property type="match status" value="1"/>
</dbReference>
<dbReference type="InterPro" id="IPR007865">
    <property type="entry name" value="Aminopep_P_N"/>
</dbReference>
<dbReference type="InterPro" id="IPR029149">
    <property type="entry name" value="Creatin/AminoP/Spt16_N"/>
</dbReference>
<dbReference type="InterPro" id="IPR036005">
    <property type="entry name" value="Creatinase/aminopeptidase-like"/>
</dbReference>
<dbReference type="InterPro" id="IPR000994">
    <property type="entry name" value="Pept_M24"/>
</dbReference>
<dbReference type="InterPro" id="IPR052433">
    <property type="entry name" value="X-Pro_dipept-like"/>
</dbReference>
<dbReference type="PANTHER" id="PTHR43226">
    <property type="entry name" value="XAA-PRO AMINOPEPTIDASE 3"/>
    <property type="match status" value="1"/>
</dbReference>
<dbReference type="PANTHER" id="PTHR43226:SF1">
    <property type="entry name" value="XAA-PRO DIPEPTIDASE"/>
    <property type="match status" value="1"/>
</dbReference>
<dbReference type="Pfam" id="PF05195">
    <property type="entry name" value="AMP_N"/>
    <property type="match status" value="1"/>
</dbReference>
<dbReference type="Pfam" id="PF00557">
    <property type="entry name" value="Peptidase_M24"/>
    <property type="match status" value="1"/>
</dbReference>
<dbReference type="SMART" id="SM01011">
    <property type="entry name" value="AMP_N"/>
    <property type="match status" value="1"/>
</dbReference>
<dbReference type="SUPFAM" id="SSF55920">
    <property type="entry name" value="Creatinase/aminopeptidase"/>
    <property type="match status" value="1"/>
</dbReference>
<dbReference type="SUPFAM" id="SSF53092">
    <property type="entry name" value="Creatinase/prolidase N-terminal domain"/>
    <property type="match status" value="1"/>
</dbReference>
<name>AMPP3_BOTFB</name>
<proteinExistence type="inferred from homology"/>
<comment type="function">
    <text evidence="1">Catalyzes the removal of a penultimate prolyl residue from the N-termini of peptides.</text>
</comment>
<comment type="catalytic activity">
    <reaction>
        <text>Release of any N-terminal amino acid, including proline, that is linked to proline, even from a dipeptide or tripeptide.</text>
        <dbReference type="EC" id="3.4.11.9"/>
    </reaction>
</comment>
<comment type="cofactor">
    <cofactor evidence="1">
        <name>Mn(2+)</name>
        <dbReference type="ChEBI" id="CHEBI:29035"/>
    </cofactor>
    <text evidence="1">Binds 2 manganese ions per subunit.</text>
</comment>
<comment type="similarity">
    <text evidence="2">Belongs to the peptidase M24B family.</text>
</comment>
<comment type="sequence caution" evidence="2">
    <conflict type="erroneous initiation">
        <sequence resource="EMBL-CDS" id="ATZ58628"/>
    </conflict>
    <text>Extended N-terminus.</text>
</comment>
<protein>
    <recommendedName>
        <fullName>Probable Xaa-Pro aminopeptidase pepP</fullName>
        <ecNumber>3.4.11.9</ecNumber>
    </recommendedName>
    <alternativeName>
        <fullName>Aminoacylproline aminopeptidase</fullName>
    </alternativeName>
    <alternativeName>
        <fullName>Prolidase</fullName>
    </alternativeName>
</protein>